<sequence>MADLEEQLSDEEKVRIAAKFIIHAPPGEFNEVFNDVRLLLNNDNLLREGAAHAFAQYNLDQFTPVKIEGYEDQVLITEHGDLGNGKFLDPKNRICFKFDHLRKEATDPRPYEAENAVESWRTSVETALRAYVKEHYPNGVCTVYGKKIDGQQTIIACIESHQFQAKNFWNGRWRSEWKFTITPSTTQVVGILKIQVHYYEDGNVQLVSHKDIQDSLTVSNEVQTAREFIKIVEAAENEYQTAISENYQTMSDTTFKALRRQLPVTRTKIDWNKILSYKIGKEMQNA</sequence>
<reference key="1">
    <citation type="submission" date="2011-03" db="EMBL/GenBank/DDBJ databases">
        <title>Version 3 of the genome sequence of Otolemur garnettii(Bushbaby).</title>
        <authorList>
            <consortium name="The Broad Institute Genome Sequencing Platform"/>
            <person name="Di Palma F."/>
            <person name="Johnson J."/>
            <person name="Lander E.S."/>
            <person name="Lindblad-Toh K."/>
            <person name="Jaffe D.B."/>
            <person name="Gnerre S."/>
            <person name="MacCallum I."/>
            <person name="Przybylski D."/>
            <person name="Ribeiro F.J."/>
            <person name="Burton J.N."/>
            <person name="Walker B.J."/>
            <person name="Sharpe T."/>
            <person name="Hall G."/>
        </authorList>
    </citation>
    <scope>NUCLEOTIDE SEQUENCE [LARGE SCALE GENOMIC DNA]</scope>
</reference>
<comment type="function">
    <text evidence="1">F-actin-capping proteins bind in a Ca(2+)-independent manner to the fast growing ends of actin filaments (barbed end) thereby blocking the exchange of subunits at these ends. Unlike other capping proteins (such as gelsolin and severin), these proteins do not sever actin filaments (By similarity).</text>
</comment>
<comment type="subunit">
    <text evidence="1">Component of the F-actin capping complex, composed of a heterodimer of an alpha and a beta subunit. Component of the WASH complex, composed of F-actin-capping protein subunit alpha (CAPZA1, CAPZA2 or CAPZA3), F-actin-capping protein subunit beta (CAPZB), WASHC1, WASHC2, WASHC3, WASHC4 and WASHC5. Interacts with RCSD1/CAPZIP (By similarity).</text>
</comment>
<comment type="similarity">
    <text evidence="3">Belongs to the F-actin-capping protein alpha subunit family.</text>
</comment>
<keyword id="KW-0007">Acetylation</keyword>
<keyword id="KW-0117">Actin capping</keyword>
<keyword id="KW-0009">Actin-binding</keyword>
<keyword id="KW-0597">Phosphoprotein</keyword>
<keyword id="KW-1185">Reference proteome</keyword>
<name>CAZA2_OTOGA</name>
<protein>
    <recommendedName>
        <fullName>F-actin-capping protein subunit alpha-2</fullName>
    </recommendedName>
    <alternativeName>
        <fullName>CapZ alpha-2</fullName>
    </alternativeName>
</protein>
<accession>Q2QLH5</accession>
<gene>
    <name type="primary">CAPZA2</name>
</gene>
<evidence type="ECO:0000250" key="1"/>
<evidence type="ECO:0000250" key="2">
    <source>
        <dbReference type="UniProtKB" id="P47755"/>
    </source>
</evidence>
<evidence type="ECO:0000305" key="3"/>
<dbReference type="EMBL" id="DP000013">
    <property type="protein sequence ID" value="ABA90403.1"/>
    <property type="molecule type" value="Genomic_DNA"/>
</dbReference>
<dbReference type="RefSeq" id="XP_003789846.1">
    <property type="nucleotide sequence ID" value="XM_003789798.3"/>
</dbReference>
<dbReference type="SMR" id="Q2QLH5"/>
<dbReference type="FunCoup" id="Q2QLH5">
    <property type="interactions" value="1911"/>
</dbReference>
<dbReference type="STRING" id="30611.ENSOGAP00000011232"/>
<dbReference type="Ensembl" id="ENSOGAT00000012544.2">
    <property type="protein sequence ID" value="ENSOGAP00000011232.2"/>
    <property type="gene ID" value="ENSOGAG00000012540.2"/>
</dbReference>
<dbReference type="GeneID" id="100947660"/>
<dbReference type="KEGG" id="oga:100947660"/>
<dbReference type="CTD" id="830"/>
<dbReference type="eggNOG" id="KOG0836">
    <property type="taxonomic scope" value="Eukaryota"/>
</dbReference>
<dbReference type="GeneTree" id="ENSGT00950000183119"/>
<dbReference type="HOGENOM" id="CLU_045161_0_0_1"/>
<dbReference type="InParanoid" id="Q2QLH5"/>
<dbReference type="OMA" id="VACIEDH"/>
<dbReference type="OrthoDB" id="340550at2759"/>
<dbReference type="TreeFam" id="TF314822"/>
<dbReference type="Proteomes" id="UP000005225">
    <property type="component" value="Unassembled WGS sequence"/>
</dbReference>
<dbReference type="GO" id="GO:0005903">
    <property type="term" value="C:brush border"/>
    <property type="evidence" value="ECO:0007669"/>
    <property type="project" value="Ensembl"/>
</dbReference>
<dbReference type="GO" id="GO:0030863">
    <property type="term" value="C:cortical cytoskeleton"/>
    <property type="evidence" value="ECO:0007669"/>
    <property type="project" value="Ensembl"/>
</dbReference>
<dbReference type="GO" id="GO:0008290">
    <property type="term" value="C:F-actin capping protein complex"/>
    <property type="evidence" value="ECO:0007669"/>
    <property type="project" value="Ensembl"/>
</dbReference>
<dbReference type="GO" id="GO:0016020">
    <property type="term" value="C:membrane"/>
    <property type="evidence" value="ECO:0007669"/>
    <property type="project" value="Ensembl"/>
</dbReference>
<dbReference type="GO" id="GO:0051015">
    <property type="term" value="F:actin filament binding"/>
    <property type="evidence" value="ECO:0007669"/>
    <property type="project" value="TreeGrafter"/>
</dbReference>
<dbReference type="GO" id="GO:0030036">
    <property type="term" value="P:actin cytoskeleton organization"/>
    <property type="evidence" value="ECO:0007669"/>
    <property type="project" value="TreeGrafter"/>
</dbReference>
<dbReference type="GO" id="GO:0051016">
    <property type="term" value="P:barbed-end actin filament capping"/>
    <property type="evidence" value="ECO:0007669"/>
    <property type="project" value="InterPro"/>
</dbReference>
<dbReference type="FunFam" id="3.30.1140.60:FF:000001">
    <property type="entry name" value="F-actin-capping protein subunit alpha"/>
    <property type="match status" value="1"/>
</dbReference>
<dbReference type="FunFam" id="3.90.1150.210:FF:000002">
    <property type="entry name" value="F-actin-capping protein subunit alpha"/>
    <property type="match status" value="1"/>
</dbReference>
<dbReference type="Gene3D" id="3.30.1140.60">
    <property type="entry name" value="F-actin capping protein, alpha subunit"/>
    <property type="match status" value="1"/>
</dbReference>
<dbReference type="Gene3D" id="3.90.1150.210">
    <property type="entry name" value="F-actin capping protein, beta subunit"/>
    <property type="match status" value="1"/>
</dbReference>
<dbReference type="InterPro" id="IPR002189">
    <property type="entry name" value="CapZ_alpha"/>
</dbReference>
<dbReference type="InterPro" id="IPR037282">
    <property type="entry name" value="CapZ_alpha/beta"/>
</dbReference>
<dbReference type="InterPro" id="IPR042276">
    <property type="entry name" value="CapZ_alpha/beta_2"/>
</dbReference>
<dbReference type="InterPro" id="IPR042489">
    <property type="entry name" value="CapZ_alpha_1"/>
</dbReference>
<dbReference type="InterPro" id="IPR017865">
    <property type="entry name" value="F-actin_cap_asu_CS"/>
</dbReference>
<dbReference type="PANTHER" id="PTHR10653">
    <property type="entry name" value="F-ACTIN-CAPPING PROTEIN SUBUNIT ALPHA"/>
    <property type="match status" value="1"/>
</dbReference>
<dbReference type="PANTHER" id="PTHR10653:SF2">
    <property type="entry name" value="F-ACTIN-CAPPING PROTEIN SUBUNIT ALPHA-2"/>
    <property type="match status" value="1"/>
</dbReference>
<dbReference type="Pfam" id="PF01267">
    <property type="entry name" value="F-actin_cap_A"/>
    <property type="match status" value="1"/>
</dbReference>
<dbReference type="PRINTS" id="PR00191">
    <property type="entry name" value="FACTINCAPA"/>
</dbReference>
<dbReference type="SUPFAM" id="SSF90096">
    <property type="entry name" value="Subunits of heterodimeric actin filament capping protein Capz"/>
    <property type="match status" value="1"/>
</dbReference>
<dbReference type="PROSITE" id="PS00748">
    <property type="entry name" value="F_ACTIN_CAPPING_A_1"/>
    <property type="match status" value="1"/>
</dbReference>
<dbReference type="PROSITE" id="PS00749">
    <property type="entry name" value="F_ACTIN_CAPPING_A_2"/>
    <property type="match status" value="1"/>
</dbReference>
<feature type="initiator methionine" description="Removed" evidence="2">
    <location>
        <position position="1"/>
    </location>
</feature>
<feature type="chain" id="PRO_0000226315" description="F-actin-capping protein subunit alpha-2">
    <location>
        <begin position="2"/>
        <end position="286"/>
    </location>
</feature>
<feature type="modified residue" description="N-acetylalanine" evidence="2">
    <location>
        <position position="2"/>
    </location>
</feature>
<feature type="modified residue" description="Phosphoserine" evidence="2">
    <location>
        <position position="9"/>
    </location>
</feature>
<organism>
    <name type="scientific">Otolemur garnettii</name>
    <name type="common">Small-eared galago</name>
    <name type="synonym">Garnett's greater bushbaby</name>
    <dbReference type="NCBI Taxonomy" id="30611"/>
    <lineage>
        <taxon>Eukaryota</taxon>
        <taxon>Metazoa</taxon>
        <taxon>Chordata</taxon>
        <taxon>Craniata</taxon>
        <taxon>Vertebrata</taxon>
        <taxon>Euteleostomi</taxon>
        <taxon>Mammalia</taxon>
        <taxon>Eutheria</taxon>
        <taxon>Euarchontoglires</taxon>
        <taxon>Primates</taxon>
        <taxon>Strepsirrhini</taxon>
        <taxon>Lorisiformes</taxon>
        <taxon>Galagidae</taxon>
        <taxon>Otolemur</taxon>
    </lineage>
</organism>
<proteinExistence type="inferred from homology"/>